<accession>Q9DUT2</accession>
<organismHost>
    <name type="scientific">Solanum lycopersicum</name>
    <name type="common">Tomato</name>
    <name type="synonym">Lycopersicon esculentum</name>
    <dbReference type="NCBI Taxonomy" id="4081"/>
</organismHost>
<name>RDRP_PZSVT</name>
<reference key="1">
    <citation type="journal article" date="2003" name="J. Gen. Virol.">
        <title>Complete nucleotide sequence of Pelargonium zonate spot virus and its relationship with the family Bromoviridae.</title>
        <authorList>
            <person name="Finetti-Sialer M."/>
            <person name="Gallitelli D."/>
        </authorList>
    </citation>
    <scope>NUCLEOTIDE SEQUENCE [GENOMIC RNA]</scope>
    <source>
        <strain>tomato</strain>
    </source>
</reference>
<keyword id="KW-0547">Nucleotide-binding</keyword>
<keyword id="KW-0548">Nucleotidyltransferase</keyword>
<keyword id="KW-1185">Reference proteome</keyword>
<keyword id="KW-0696">RNA-directed RNA polymerase</keyword>
<keyword id="KW-0808">Transferase</keyword>
<keyword id="KW-0693">Viral RNA replication</keyword>
<dbReference type="EC" id="2.7.7.48"/>
<dbReference type="EMBL" id="AJ272328">
    <property type="protein sequence ID" value="CAC08527.1"/>
    <property type="molecule type" value="Genomic_RNA"/>
</dbReference>
<dbReference type="RefSeq" id="NP_619771.1">
    <property type="nucleotide sequence ID" value="NC_003650.1"/>
</dbReference>
<dbReference type="KEGG" id="vg:956569"/>
<dbReference type="Proteomes" id="UP000000411">
    <property type="component" value="Genome"/>
</dbReference>
<dbReference type="GO" id="GO:0000166">
    <property type="term" value="F:nucleotide binding"/>
    <property type="evidence" value="ECO:0007669"/>
    <property type="project" value="UniProtKB-KW"/>
</dbReference>
<dbReference type="GO" id="GO:0003723">
    <property type="term" value="F:RNA binding"/>
    <property type="evidence" value="ECO:0007669"/>
    <property type="project" value="InterPro"/>
</dbReference>
<dbReference type="GO" id="GO:0003968">
    <property type="term" value="F:RNA-directed RNA polymerase activity"/>
    <property type="evidence" value="ECO:0007669"/>
    <property type="project" value="UniProtKB-KW"/>
</dbReference>
<dbReference type="GO" id="GO:0006351">
    <property type="term" value="P:DNA-templated transcription"/>
    <property type="evidence" value="ECO:0007669"/>
    <property type="project" value="InterPro"/>
</dbReference>
<dbReference type="GO" id="GO:0039694">
    <property type="term" value="P:viral RNA genome replication"/>
    <property type="evidence" value="ECO:0007669"/>
    <property type="project" value="InterPro"/>
</dbReference>
<dbReference type="InterPro" id="IPR043502">
    <property type="entry name" value="DNA/RNA_pol_sf"/>
</dbReference>
<dbReference type="InterPro" id="IPR001788">
    <property type="entry name" value="RNA-dep_RNA_pol_alsuvir"/>
</dbReference>
<dbReference type="InterPro" id="IPR007094">
    <property type="entry name" value="RNA-dir_pol_PSvirus"/>
</dbReference>
<dbReference type="Pfam" id="PF00978">
    <property type="entry name" value="RdRP_2"/>
    <property type="match status" value="1"/>
</dbReference>
<dbReference type="SUPFAM" id="SSF56672">
    <property type="entry name" value="DNA/RNA polymerases"/>
    <property type="match status" value="1"/>
</dbReference>
<dbReference type="PROSITE" id="PS50507">
    <property type="entry name" value="RDRP_SSRNA_POS"/>
    <property type="match status" value="1"/>
</dbReference>
<feature type="chain" id="PRO_0000402417" description="RNA-directed RNA polymerase 2a">
    <location>
        <begin position="1"/>
        <end position="687"/>
    </location>
</feature>
<feature type="domain" description="RdRp catalytic" evidence="2">
    <location>
        <begin position="427"/>
        <end position="540"/>
    </location>
</feature>
<gene>
    <name type="ORF">ORF2a</name>
</gene>
<comment type="function">
    <text evidence="3">RNA-dependent RNA polymerase which replicates the viral genome composed of 3 RNA segments, RNA1, RNA2 and RNA3.</text>
</comment>
<comment type="catalytic activity">
    <reaction evidence="2">
        <text>RNA(n) + a ribonucleoside 5'-triphosphate = RNA(n+1) + diphosphate</text>
        <dbReference type="Rhea" id="RHEA:21248"/>
        <dbReference type="Rhea" id="RHEA-COMP:14527"/>
        <dbReference type="Rhea" id="RHEA-COMP:17342"/>
        <dbReference type="ChEBI" id="CHEBI:33019"/>
        <dbReference type="ChEBI" id="CHEBI:61557"/>
        <dbReference type="ChEBI" id="CHEBI:140395"/>
        <dbReference type="EC" id="2.7.7.48"/>
    </reaction>
</comment>
<comment type="subunit">
    <text evidence="1">Interacts with replication protein 1a.</text>
</comment>
<comment type="similarity">
    <text evidence="3">Belongs to the ssRNA positive-strand viruses RNA-directed RNA polymerase family.</text>
</comment>
<organism>
    <name type="scientific">Pelargonium zonate spot virus (isolate Tomato/Italy/1982)</name>
    <name type="common">PZSV</name>
    <name type="synonym">Pelargonium zonate spot virus (isolate Tomato)</name>
    <dbReference type="NCBI Taxonomy" id="650488"/>
    <lineage>
        <taxon>Viruses</taxon>
        <taxon>Riboviria</taxon>
        <taxon>Orthornavirae</taxon>
        <taxon>Kitrinoviricota</taxon>
        <taxon>Alsuviricetes</taxon>
        <taxon>Martellivirales</taxon>
        <taxon>Bromoviridae</taxon>
        <taxon>Anulavirus</taxon>
        <taxon>Pelargonium zonate spot virus</taxon>
    </lineage>
</organism>
<protein>
    <recommendedName>
        <fullName>RNA-directed RNA polymerase 2a</fullName>
        <shortName>protein 2a</shortName>
        <ecNumber>2.7.7.48</ecNumber>
    </recommendedName>
</protein>
<evidence type="ECO:0000250" key="1"/>
<evidence type="ECO:0000255" key="2">
    <source>
        <dbReference type="PROSITE-ProRule" id="PRU00539"/>
    </source>
</evidence>
<evidence type="ECO:0000305" key="3"/>
<proteinExistence type="inferred from homology"/>
<sequence length="687" mass="78996">MAAFTFENFLSGAYTGLPIDKFRALGLNTEDYDEQRWEMLVKCVDSGLMQFSCSRDEALVLLWNEEELPKDDDDEVPYEVPCWTPDTDATVIDDVSEWLAEKTSVRDTVVVCSDYDAVSETPVEVLSVELEEDSEEDTIADVCLDARRKSFRDYFTIVEEEFVEEDPLISLNDGNVCPVRTHEVTSLEKPVMLDVGRRCDRVNLESLQGAINMNLPSHAYFDDTWHQYFVEGSKLDVDFDNIRLRQSEVFCDRDLDRYYQPELFAGASSRRIGTQKEALVAIRKRNADVPELADSVDVERLSESVAKKFLSSYVCDLKPVVGVMEKMRAYHQKWGDKIDPMFLLKEHNLQRYEHMIKTDVKPTVAHSMHVERAIPATITFHGKSICAGFSPSFTALFDEFQKSLDERVVIPSGPISTIEMDFDIRNKYYLEVDLSKFDKSQGLLHLEFQRKILCKIGLPAHLANWWCDFHYKSFISDPRAKVSFNCSFQRRTGDAFTFFGNTLVTMAMFSFCYDTRQFEKMLFAGDDSLAISSSPIVGCSDYFVSLFNMEAKIMDPGVPYICSKFLVSDELGRCFSAPDPIREFQRLGKKKISADNDDALFEQYVGFKDRMSHMRNFSEYEIQQLKIFFNLKYKQSGEVIEDYMGACMFYSDNFKNFKTLFTKTCAPLVAALNKRVKDKPFRLPPSL</sequence>